<name>FBX27_HUMAN</name>
<accession>Q8NI29</accession>
<accession>Q96C87</accession>
<comment type="function">
    <text evidence="5">Substrate-recognition component of the SCF (SKP1-CUL1-F-box protein)-type E3 ubiquitin ligase complex. Able to recognize and bind denatured glycoproteins, which are modified with complex-type oligosaccharides.</text>
</comment>
<comment type="subunit">
    <text evidence="5">Part of a SCF (SKP1-cullin-F-box) protein ligase complex. Interacts with SKP1 and CUL1.</text>
</comment>
<comment type="interaction">
    <interactant intactId="EBI-6425694">
        <id>Q8NI29</id>
    </interactant>
    <interactant intactId="EBI-307486">
        <id>P63208</id>
        <label>SKP1</label>
    </interactant>
    <organismsDiffer>false</organismsDiffer>
    <experiments>3</experiments>
</comment>
<comment type="tissue specificity">
    <text evidence="4">Predominantly expressed in brain, heart and kidney. Expressed at lower levels in liver and lung.</text>
</comment>
<dbReference type="EMBL" id="AF436061">
    <property type="protein sequence ID" value="AAM27918.1"/>
    <property type="molecule type" value="mRNA"/>
</dbReference>
<dbReference type="EMBL" id="BC014527">
    <property type="protein sequence ID" value="AAH14527.1"/>
    <property type="molecule type" value="mRNA"/>
</dbReference>
<dbReference type="EMBL" id="BC030060">
    <property type="protein sequence ID" value="AAH30060.1"/>
    <property type="molecule type" value="mRNA"/>
</dbReference>
<dbReference type="CCDS" id="CCDS12527.1"/>
<dbReference type="RefSeq" id="NP_849142.1">
    <property type="nucleotide sequence ID" value="NM_178820.5"/>
</dbReference>
<dbReference type="RefSeq" id="XP_047294130.1">
    <property type="nucleotide sequence ID" value="XM_047438174.1"/>
</dbReference>
<dbReference type="RefSeq" id="XP_054175796.1">
    <property type="nucleotide sequence ID" value="XM_054319821.1"/>
</dbReference>
<dbReference type="SMR" id="Q8NI29"/>
<dbReference type="BioGRID" id="125992">
    <property type="interactions" value="26"/>
</dbReference>
<dbReference type="ComplexPortal" id="CPX-7966">
    <property type="entry name" value="SCF E3 ubiquitin ligase complex, FBXO27 variant"/>
</dbReference>
<dbReference type="CORUM" id="Q8NI29"/>
<dbReference type="FunCoup" id="Q8NI29">
    <property type="interactions" value="92"/>
</dbReference>
<dbReference type="IntAct" id="Q8NI29">
    <property type="interactions" value="10"/>
</dbReference>
<dbReference type="STRING" id="9606.ENSP00000292853"/>
<dbReference type="GlyGen" id="Q8NI29">
    <property type="glycosylation" value="1 site, 1 N-linked glycan (1 site)"/>
</dbReference>
<dbReference type="iPTMnet" id="Q8NI29"/>
<dbReference type="PhosphoSitePlus" id="Q8NI29"/>
<dbReference type="BioMuta" id="FBXO27"/>
<dbReference type="DMDM" id="51338809"/>
<dbReference type="jPOST" id="Q8NI29"/>
<dbReference type="MassIVE" id="Q8NI29"/>
<dbReference type="PaxDb" id="9606-ENSP00000292853"/>
<dbReference type="PeptideAtlas" id="Q8NI29"/>
<dbReference type="ProteomicsDB" id="73819"/>
<dbReference type="Pumba" id="Q8NI29"/>
<dbReference type="Antibodypedia" id="30249">
    <property type="antibodies" value="130 antibodies from 22 providers"/>
</dbReference>
<dbReference type="DNASU" id="126433"/>
<dbReference type="Ensembl" id="ENST00000292853.9">
    <property type="protein sequence ID" value="ENSP00000292853.3"/>
    <property type="gene ID" value="ENSG00000161243.10"/>
</dbReference>
<dbReference type="GeneID" id="126433"/>
<dbReference type="KEGG" id="hsa:126433"/>
<dbReference type="MANE-Select" id="ENST00000292853.9">
    <property type="protein sequence ID" value="ENSP00000292853.3"/>
    <property type="RefSeq nucleotide sequence ID" value="NM_178820.5"/>
    <property type="RefSeq protein sequence ID" value="NP_849142.1"/>
</dbReference>
<dbReference type="UCSC" id="uc002okh.5">
    <property type="organism name" value="human"/>
</dbReference>
<dbReference type="AGR" id="HGNC:18753"/>
<dbReference type="CTD" id="126433"/>
<dbReference type="DisGeNET" id="126433"/>
<dbReference type="GeneCards" id="FBXO27"/>
<dbReference type="HGNC" id="HGNC:18753">
    <property type="gene designation" value="FBXO27"/>
</dbReference>
<dbReference type="HPA" id="ENSG00000161243">
    <property type="expression patterns" value="Tissue enhanced (skin)"/>
</dbReference>
<dbReference type="MIM" id="609099">
    <property type="type" value="gene"/>
</dbReference>
<dbReference type="neXtProt" id="NX_Q8NI29"/>
<dbReference type="OpenTargets" id="ENSG00000161243"/>
<dbReference type="PharmGKB" id="PA38675"/>
<dbReference type="VEuPathDB" id="HostDB:ENSG00000161243"/>
<dbReference type="eggNOG" id="ENOG502RZA6">
    <property type="taxonomic scope" value="Eukaryota"/>
</dbReference>
<dbReference type="GeneTree" id="ENSGT00940000161841"/>
<dbReference type="InParanoid" id="Q8NI29"/>
<dbReference type="OMA" id="TCFASSY"/>
<dbReference type="OrthoDB" id="1107553at2759"/>
<dbReference type="PAN-GO" id="Q8NI29">
    <property type="GO annotations" value="6 GO annotations based on evolutionary models"/>
</dbReference>
<dbReference type="PhylomeDB" id="Q8NI29"/>
<dbReference type="TreeFam" id="TF320527"/>
<dbReference type="PathwayCommons" id="Q8NI29"/>
<dbReference type="Reactome" id="R-HSA-8951664">
    <property type="pathway name" value="Neddylation"/>
</dbReference>
<dbReference type="Reactome" id="R-HSA-983168">
    <property type="pathway name" value="Antigen processing: Ubiquitination &amp; Proteasome degradation"/>
</dbReference>
<dbReference type="SignaLink" id="Q8NI29"/>
<dbReference type="SIGNOR" id="Q8NI29"/>
<dbReference type="BioGRID-ORCS" id="126433">
    <property type="hits" value="10 hits in 1197 CRISPR screens"/>
</dbReference>
<dbReference type="ChiTaRS" id="FBXO27">
    <property type="organism name" value="human"/>
</dbReference>
<dbReference type="GenomeRNAi" id="126433"/>
<dbReference type="Pharos" id="Q8NI29">
    <property type="development level" value="Tdark"/>
</dbReference>
<dbReference type="PRO" id="PR:Q8NI29"/>
<dbReference type="Proteomes" id="UP000005640">
    <property type="component" value="Chromosome 19"/>
</dbReference>
<dbReference type="RNAct" id="Q8NI29">
    <property type="molecule type" value="protein"/>
</dbReference>
<dbReference type="Bgee" id="ENSG00000161243">
    <property type="expression patterns" value="Expressed in secondary oocyte and 102 other cell types or tissues"/>
</dbReference>
<dbReference type="ExpressionAtlas" id="Q8NI29">
    <property type="expression patterns" value="baseline and differential"/>
</dbReference>
<dbReference type="GO" id="GO:0005737">
    <property type="term" value="C:cytoplasm"/>
    <property type="evidence" value="ECO:0000318"/>
    <property type="project" value="GO_Central"/>
</dbReference>
<dbReference type="GO" id="GO:0005829">
    <property type="term" value="C:cytosol"/>
    <property type="evidence" value="ECO:0000304"/>
    <property type="project" value="Reactome"/>
</dbReference>
<dbReference type="GO" id="GO:0019005">
    <property type="term" value="C:SCF ubiquitin ligase complex"/>
    <property type="evidence" value="ECO:0000314"/>
    <property type="project" value="UniProtKB"/>
</dbReference>
<dbReference type="GO" id="GO:0036503">
    <property type="term" value="P:ERAD pathway"/>
    <property type="evidence" value="ECO:0000318"/>
    <property type="project" value="GO_Central"/>
</dbReference>
<dbReference type="GO" id="GO:0006516">
    <property type="term" value="P:glycoprotein catabolic process"/>
    <property type="evidence" value="ECO:0000318"/>
    <property type="project" value="GO_Central"/>
</dbReference>
<dbReference type="GO" id="GO:0031146">
    <property type="term" value="P:SCF-dependent proteasomal ubiquitin-dependent protein catabolic process"/>
    <property type="evidence" value="ECO:0000318"/>
    <property type="project" value="GO_Central"/>
</dbReference>
<dbReference type="FunFam" id="2.60.120.260:FF:000012">
    <property type="entry name" value="F-box only protein 2"/>
    <property type="match status" value="1"/>
</dbReference>
<dbReference type="FunFam" id="1.20.1280.50:FF:000002">
    <property type="entry name" value="F-box only protein 44"/>
    <property type="match status" value="1"/>
</dbReference>
<dbReference type="Gene3D" id="1.20.1280.50">
    <property type="match status" value="1"/>
</dbReference>
<dbReference type="Gene3D" id="2.60.120.260">
    <property type="entry name" value="Galactose-binding domain-like"/>
    <property type="match status" value="1"/>
</dbReference>
<dbReference type="InterPro" id="IPR007397">
    <property type="entry name" value="F-box-assoc_dom"/>
</dbReference>
<dbReference type="InterPro" id="IPR036047">
    <property type="entry name" value="F-box-like_dom_sf"/>
</dbReference>
<dbReference type="InterPro" id="IPR001810">
    <property type="entry name" value="F-box_dom"/>
</dbReference>
<dbReference type="InterPro" id="IPR039752">
    <property type="entry name" value="F-box_only"/>
</dbReference>
<dbReference type="InterPro" id="IPR008979">
    <property type="entry name" value="Galactose-bd-like_sf"/>
</dbReference>
<dbReference type="PANTHER" id="PTHR12125:SF9">
    <property type="entry name" value="F-BOX ONLY PROTEIN 27"/>
    <property type="match status" value="1"/>
</dbReference>
<dbReference type="PANTHER" id="PTHR12125">
    <property type="entry name" value="F-BOX ONLY PROTEIN 6-LIKE PROTEIN"/>
    <property type="match status" value="1"/>
</dbReference>
<dbReference type="Pfam" id="PF12937">
    <property type="entry name" value="F-box-like"/>
    <property type="match status" value="1"/>
</dbReference>
<dbReference type="Pfam" id="PF04300">
    <property type="entry name" value="FBA"/>
    <property type="match status" value="1"/>
</dbReference>
<dbReference type="SMART" id="SM01198">
    <property type="entry name" value="FBA"/>
    <property type="match status" value="1"/>
</dbReference>
<dbReference type="SMART" id="SM00256">
    <property type="entry name" value="FBOX"/>
    <property type="match status" value="1"/>
</dbReference>
<dbReference type="SUPFAM" id="SSF81383">
    <property type="entry name" value="F-box domain"/>
    <property type="match status" value="1"/>
</dbReference>
<dbReference type="SUPFAM" id="SSF49785">
    <property type="entry name" value="Galactose-binding domain-like"/>
    <property type="match status" value="1"/>
</dbReference>
<dbReference type="PROSITE" id="PS51114">
    <property type="entry name" value="FBA"/>
    <property type="match status" value="1"/>
</dbReference>
<dbReference type="PROSITE" id="PS50181">
    <property type="entry name" value="FBOX"/>
    <property type="match status" value="1"/>
</dbReference>
<gene>
    <name type="primary">FBXO27</name>
    <name type="synonym">FBG5</name>
    <name type="synonym">FBX27</name>
</gene>
<organism>
    <name type="scientific">Homo sapiens</name>
    <name type="common">Human</name>
    <dbReference type="NCBI Taxonomy" id="9606"/>
    <lineage>
        <taxon>Eukaryota</taxon>
        <taxon>Metazoa</taxon>
        <taxon>Chordata</taxon>
        <taxon>Craniata</taxon>
        <taxon>Vertebrata</taxon>
        <taxon>Euteleostomi</taxon>
        <taxon>Mammalia</taxon>
        <taxon>Eutheria</taxon>
        <taxon>Euarchontoglires</taxon>
        <taxon>Primates</taxon>
        <taxon>Haplorrhini</taxon>
        <taxon>Catarrhini</taxon>
        <taxon>Hominidae</taxon>
        <taxon>Homo</taxon>
    </lineage>
</organism>
<keyword id="KW-1267">Proteomics identification</keyword>
<keyword id="KW-1185">Reference proteome</keyword>
<keyword id="KW-0833">Ubl conjugation pathway</keyword>
<protein>
    <recommendedName>
        <fullName>F-box only protein 27</fullName>
    </recommendedName>
    <alternativeName>
        <fullName>F-box/G-domain protein 5</fullName>
    </alternativeName>
</protein>
<proteinExistence type="evidence at protein level"/>
<feature type="chain" id="PRO_0000119914" description="F-box only protein 27">
    <location>
        <begin position="1"/>
        <end position="283"/>
    </location>
</feature>
<feature type="domain" description="F-box" evidence="1">
    <location>
        <begin position="23"/>
        <end position="70"/>
    </location>
</feature>
<feature type="domain" description="FBA" evidence="2">
    <location>
        <begin position="104"/>
        <end position="280"/>
    </location>
</feature>
<feature type="region of interest" description="Disordered" evidence="3">
    <location>
        <begin position="1"/>
        <end position="23"/>
    </location>
</feature>
<feature type="mutagenesis site" description="Reduces interaction with glycosylated concanavalin-A in vitro." evidence="5">
    <original>FW</original>
    <variation>AA</variation>
    <location>
        <begin position="262"/>
        <end position="263"/>
    </location>
</feature>
<feature type="sequence conflict" description="In Ref. 1; AAM27918." evidence="6" ref="1">
    <original>G</original>
    <variation>C</variation>
    <location>
        <position position="8"/>
    </location>
</feature>
<evidence type="ECO:0000255" key="1">
    <source>
        <dbReference type="PROSITE-ProRule" id="PRU00080"/>
    </source>
</evidence>
<evidence type="ECO:0000255" key="2">
    <source>
        <dbReference type="PROSITE-ProRule" id="PRU00482"/>
    </source>
</evidence>
<evidence type="ECO:0000256" key="3">
    <source>
        <dbReference type="SAM" id="MobiDB-lite"/>
    </source>
</evidence>
<evidence type="ECO:0000269" key="4">
    <source>
    </source>
</evidence>
<evidence type="ECO:0000269" key="5">
    <source>
    </source>
</evidence>
<evidence type="ECO:0000305" key="6"/>
<reference key="1">
    <citation type="journal article" date="2002" name="Gene">
        <title>A new subfamily of structurally related human F-box proteins.</title>
        <authorList>
            <person name="Ilyin G.P."/>
            <person name="Serandour A.L."/>
            <person name="Pigeon C."/>
            <person name="Rialland M."/>
            <person name="Glaise D."/>
            <person name="Guguen-Guillouzo C."/>
        </authorList>
    </citation>
    <scope>NUCLEOTIDE SEQUENCE [MRNA]</scope>
    <scope>TISSUE SPECIFICITY</scope>
</reference>
<reference key="2">
    <citation type="journal article" date="2004" name="Genome Res.">
        <title>The status, quality, and expansion of the NIH full-length cDNA project: the Mammalian Gene Collection (MGC).</title>
        <authorList>
            <consortium name="The MGC Project Team"/>
        </authorList>
    </citation>
    <scope>NUCLEOTIDE SEQUENCE [LARGE SCALE MRNA]</scope>
    <source>
        <tissue>Pancreas</tissue>
        <tissue>Placenta</tissue>
    </source>
</reference>
<reference key="3">
    <citation type="journal article" date="2008" name="J. Biol. Chem.">
        <title>Diversity in tissue expression, substrate binding, and SCF complex formation for a lectin family of ubiquitin ligases.</title>
        <authorList>
            <person name="Glenn K.A."/>
            <person name="Nelson R.F."/>
            <person name="Wen H.M."/>
            <person name="Mallinger A.J."/>
            <person name="Paulson H.L."/>
        </authorList>
    </citation>
    <scope>SUGAR-BINDING</scope>
    <scope>FUNCTION</scope>
    <scope>INTERACTION WITH CUL1 AND SKP1</scope>
    <scope>IDENTIFICATION IN SCF-COMPLEX</scope>
    <scope>MUTAGENESIS OF 262-PHE-TRP-263</scope>
</reference>
<sequence>MGASVSRGRAARVPAPEPEPEEALDLSQLPPELLLVVLSHVPPRTLLGRCRQVCRGWRALVDGQALWLLILARDHGATGRALLHLARSCQSPARNARPCPLGRFCARRPIGRNLIRNPCGQEGLRKWMVQHGGDGWVVEENRTTVPGAPSQTCFVTSFSWCCKKQVLDLEEEGLWPELLDSGRIEICVSDWWGARHDSGCMYRLLVQLLDANQTVLDKFSAVPDPIPQWNNNACLHVTHVFSNIKMGVRFVSFEHRGQDTQFWAGHYGARVTNSSVIVRVRLS</sequence>